<name>SPED_PSESM</name>
<sequence>MKSKLKLHGFNNLTKTLSFNIYDICYAETPQDQQAYVEYINSVYDAERLTRILTDVVDIIGANILNIARQDYDPQGASVTILISEQPVTPTESQIEESPGPLPETILAHLDKSHITVHTYPEIHPVDGIATFRVDIDVSTCGVISPLKALNYLIHKFESDIVTVDYRVRGFTRDVEGKKHFIDHEINSIQNYLSEDTRNGYQMTDVNVYQENLFHTKMLLKQFELDNYLFGDATSNLSAEQREQVTAKVKHEMLEIFYGRNVAV</sequence>
<organism>
    <name type="scientific">Pseudomonas syringae pv. tomato (strain ATCC BAA-871 / DC3000)</name>
    <dbReference type="NCBI Taxonomy" id="223283"/>
    <lineage>
        <taxon>Bacteria</taxon>
        <taxon>Pseudomonadati</taxon>
        <taxon>Pseudomonadota</taxon>
        <taxon>Gammaproteobacteria</taxon>
        <taxon>Pseudomonadales</taxon>
        <taxon>Pseudomonadaceae</taxon>
        <taxon>Pseudomonas</taxon>
    </lineage>
</organism>
<evidence type="ECO:0000255" key="1">
    <source>
        <dbReference type="HAMAP-Rule" id="MF_00465"/>
    </source>
</evidence>
<accession>Q889Z9</accession>
<proteinExistence type="inferred from homology"/>
<keyword id="KW-0068">Autocatalytic cleavage</keyword>
<keyword id="KW-0210">Decarboxylase</keyword>
<keyword id="KW-0456">Lyase</keyword>
<keyword id="KW-0620">Polyamine biosynthesis</keyword>
<keyword id="KW-0670">Pyruvate</keyword>
<keyword id="KW-1185">Reference proteome</keyword>
<keyword id="KW-0949">S-adenosyl-L-methionine</keyword>
<keyword id="KW-0704">Schiff base</keyword>
<keyword id="KW-0745">Spermidine biosynthesis</keyword>
<keyword id="KW-0865">Zymogen</keyword>
<feature type="chain" id="PRO_0000030055" description="S-adenosylmethionine decarboxylase beta chain" evidence="1">
    <location>
        <begin position="1"/>
        <end position="112"/>
    </location>
</feature>
<feature type="chain" id="PRO_0000030056" description="S-adenosylmethionine decarboxylase alpha chain" evidence="1">
    <location>
        <begin position="113"/>
        <end position="264"/>
    </location>
</feature>
<feature type="active site" description="Schiff-base intermediate with substrate; via pyruvic acid" evidence="1">
    <location>
        <position position="113"/>
    </location>
</feature>
<feature type="active site" description="Proton acceptor; for processing activity" evidence="1">
    <location>
        <position position="118"/>
    </location>
</feature>
<feature type="active site" description="Proton donor; for catalytic activity" evidence="1">
    <location>
        <position position="141"/>
    </location>
</feature>
<feature type="site" description="Cleavage (non-hydrolytic); by autolysis" evidence="1">
    <location>
        <begin position="112"/>
        <end position="113"/>
    </location>
</feature>
<feature type="modified residue" description="Pyruvic acid (Ser); by autocatalysis" evidence="1">
    <location>
        <position position="113"/>
    </location>
</feature>
<reference key="1">
    <citation type="journal article" date="2003" name="Proc. Natl. Acad. Sci. U.S.A.">
        <title>The complete genome sequence of the Arabidopsis and tomato pathogen Pseudomonas syringae pv. tomato DC3000.</title>
        <authorList>
            <person name="Buell C.R."/>
            <person name="Joardar V."/>
            <person name="Lindeberg M."/>
            <person name="Selengut J."/>
            <person name="Paulsen I.T."/>
            <person name="Gwinn M.L."/>
            <person name="Dodson R.J."/>
            <person name="DeBoy R.T."/>
            <person name="Durkin A.S."/>
            <person name="Kolonay J.F."/>
            <person name="Madupu R."/>
            <person name="Daugherty S.C."/>
            <person name="Brinkac L.M."/>
            <person name="Beanan M.J."/>
            <person name="Haft D.H."/>
            <person name="Nelson W.C."/>
            <person name="Davidsen T.M."/>
            <person name="Zafar N."/>
            <person name="Zhou L."/>
            <person name="Liu J."/>
            <person name="Yuan Q."/>
            <person name="Khouri H.M."/>
            <person name="Fedorova N.B."/>
            <person name="Tran B."/>
            <person name="Russell D."/>
            <person name="Berry K.J."/>
            <person name="Utterback T.R."/>
            <person name="Van Aken S.E."/>
            <person name="Feldblyum T.V."/>
            <person name="D'Ascenzo M."/>
            <person name="Deng W.-L."/>
            <person name="Ramos A.R."/>
            <person name="Alfano J.R."/>
            <person name="Cartinhour S."/>
            <person name="Chatterjee A.K."/>
            <person name="Delaney T.P."/>
            <person name="Lazarowitz S.G."/>
            <person name="Martin G.B."/>
            <person name="Schneider D.J."/>
            <person name="Tang X."/>
            <person name="Bender C.L."/>
            <person name="White O."/>
            <person name="Fraser C.M."/>
            <person name="Collmer A."/>
        </authorList>
    </citation>
    <scope>NUCLEOTIDE SEQUENCE [LARGE SCALE GENOMIC DNA]</scope>
    <source>
        <strain>ATCC BAA-871 / DC3000</strain>
    </source>
</reference>
<protein>
    <recommendedName>
        <fullName evidence="1">S-adenosylmethionine decarboxylase proenzyme</fullName>
        <shortName evidence="1">AdoMetDC</shortName>
        <shortName evidence="1">SAMDC</shortName>
        <ecNumber evidence="1">4.1.1.50</ecNumber>
    </recommendedName>
    <component>
        <recommendedName>
            <fullName evidence="1">S-adenosylmethionine decarboxylase beta chain</fullName>
        </recommendedName>
    </component>
    <component>
        <recommendedName>
            <fullName evidence="1">S-adenosylmethionine decarboxylase alpha chain</fullName>
        </recommendedName>
    </component>
</protein>
<gene>
    <name evidence="1" type="primary">speD</name>
    <name type="ordered locus">PSPTO_0598</name>
</gene>
<comment type="function">
    <text evidence="1">Catalyzes the decarboxylation of S-adenosylmethionine to S-adenosylmethioninamine (dcAdoMet), the propylamine donor required for the synthesis of the polyamines spermine and spermidine from the diamine putrescine.</text>
</comment>
<comment type="catalytic activity">
    <reaction evidence="1">
        <text>S-adenosyl-L-methionine + H(+) = S-adenosyl 3-(methylsulfanyl)propylamine + CO2</text>
        <dbReference type="Rhea" id="RHEA:15981"/>
        <dbReference type="ChEBI" id="CHEBI:15378"/>
        <dbReference type="ChEBI" id="CHEBI:16526"/>
        <dbReference type="ChEBI" id="CHEBI:57443"/>
        <dbReference type="ChEBI" id="CHEBI:59789"/>
        <dbReference type="EC" id="4.1.1.50"/>
    </reaction>
</comment>
<comment type="cofactor">
    <cofactor evidence="1">
        <name>pyruvate</name>
        <dbReference type="ChEBI" id="CHEBI:15361"/>
    </cofactor>
    <text evidence="1">Binds 1 pyruvoyl group covalently per subunit.</text>
</comment>
<comment type="pathway">
    <text evidence="1">Amine and polyamine biosynthesis; S-adenosylmethioninamine biosynthesis; S-adenosylmethioninamine from S-adenosyl-L-methionine: step 1/1.</text>
</comment>
<comment type="subunit">
    <text evidence="1">Heterooctamer of four alpha and four beta chains arranged as a tetramer of alpha/beta heterodimers.</text>
</comment>
<comment type="PTM">
    <text evidence="1">Is synthesized initially as an inactive proenzyme. Formation of the active enzyme involves a self-maturation process in which the active site pyruvoyl group is generated from an internal serine residue via an autocatalytic post-translational modification. Two non-identical subunits are generated from the proenzyme in this reaction, and the pyruvate is formed at the N-terminus of the alpha chain, which is derived from the carboxyl end of the proenzyme. The post-translation cleavage follows an unusual pathway, termed non-hydrolytic serinolysis, in which the side chain hydroxyl group of the serine supplies its oxygen atom to form the C-terminus of the beta chain, while the remainder of the serine residue undergoes an oxidative deamination to produce ammonia and the pyruvoyl group blocking the N-terminus of the alpha chain.</text>
</comment>
<comment type="similarity">
    <text evidence="1">Belongs to the prokaryotic AdoMetDC family. Type 2 subfamily.</text>
</comment>
<dbReference type="EC" id="4.1.1.50" evidence="1"/>
<dbReference type="EMBL" id="AE016853">
    <property type="protein sequence ID" value="AAO54140.1"/>
    <property type="molecule type" value="Genomic_DNA"/>
</dbReference>
<dbReference type="RefSeq" id="NP_790445.1">
    <property type="nucleotide sequence ID" value="NC_004578.1"/>
</dbReference>
<dbReference type="RefSeq" id="WP_002551946.1">
    <property type="nucleotide sequence ID" value="NC_004578.1"/>
</dbReference>
<dbReference type="SMR" id="Q889Z9"/>
<dbReference type="STRING" id="223283.PSPTO_0598"/>
<dbReference type="GeneID" id="96221066"/>
<dbReference type="KEGG" id="pst:PSPTO_0598"/>
<dbReference type="PATRIC" id="fig|223283.9.peg.603"/>
<dbReference type="eggNOG" id="COG1586">
    <property type="taxonomic scope" value="Bacteria"/>
</dbReference>
<dbReference type="HOGENOM" id="CLU_092007_0_0_6"/>
<dbReference type="OrthoDB" id="5290709at2"/>
<dbReference type="PhylomeDB" id="Q889Z9"/>
<dbReference type="UniPathway" id="UPA00331">
    <property type="reaction ID" value="UER00451"/>
</dbReference>
<dbReference type="Proteomes" id="UP000002515">
    <property type="component" value="Chromosome"/>
</dbReference>
<dbReference type="GO" id="GO:0005829">
    <property type="term" value="C:cytosol"/>
    <property type="evidence" value="ECO:0007669"/>
    <property type="project" value="TreeGrafter"/>
</dbReference>
<dbReference type="GO" id="GO:0004014">
    <property type="term" value="F:adenosylmethionine decarboxylase activity"/>
    <property type="evidence" value="ECO:0007669"/>
    <property type="project" value="UniProtKB-UniRule"/>
</dbReference>
<dbReference type="GO" id="GO:0008295">
    <property type="term" value="P:spermidine biosynthetic process"/>
    <property type="evidence" value="ECO:0007669"/>
    <property type="project" value="UniProtKB-UniRule"/>
</dbReference>
<dbReference type="Gene3D" id="3.60.90.10">
    <property type="entry name" value="S-adenosylmethionine decarboxylase"/>
    <property type="match status" value="1"/>
</dbReference>
<dbReference type="HAMAP" id="MF_00465">
    <property type="entry name" value="AdoMetDC_2"/>
    <property type="match status" value="1"/>
</dbReference>
<dbReference type="InterPro" id="IPR003826">
    <property type="entry name" value="AdoMetDC_fam_prok"/>
</dbReference>
<dbReference type="InterPro" id="IPR009165">
    <property type="entry name" value="S-AdoMet_deCO2ase_bac"/>
</dbReference>
<dbReference type="InterPro" id="IPR016067">
    <property type="entry name" value="S-AdoMet_deCO2ase_core"/>
</dbReference>
<dbReference type="NCBIfam" id="TIGR03331">
    <property type="entry name" value="SAM_DCase_Eco"/>
    <property type="match status" value="1"/>
</dbReference>
<dbReference type="PANTHER" id="PTHR33866">
    <property type="entry name" value="S-ADENOSYLMETHIONINE DECARBOXYLASE PROENZYME"/>
    <property type="match status" value="1"/>
</dbReference>
<dbReference type="PANTHER" id="PTHR33866:SF1">
    <property type="entry name" value="S-ADENOSYLMETHIONINE DECARBOXYLASE PROENZYME"/>
    <property type="match status" value="1"/>
</dbReference>
<dbReference type="Pfam" id="PF02675">
    <property type="entry name" value="AdoMet_dc"/>
    <property type="match status" value="1"/>
</dbReference>
<dbReference type="PIRSF" id="PIRSF001356">
    <property type="entry name" value="SAM_decarboxylas"/>
    <property type="match status" value="1"/>
</dbReference>
<dbReference type="SUPFAM" id="SSF56276">
    <property type="entry name" value="S-adenosylmethionine decarboxylase"/>
    <property type="match status" value="1"/>
</dbReference>